<evidence type="ECO:0000250" key="1"/>
<evidence type="ECO:0000255" key="2">
    <source>
        <dbReference type="PROSITE-ProRule" id="PRU00214"/>
    </source>
</evidence>
<evidence type="ECO:0000269" key="3">
    <source>
    </source>
</evidence>
<evidence type="ECO:0000269" key="4">
    <source>
    </source>
</evidence>
<evidence type="ECO:0000269" key="5">
    <source>
    </source>
</evidence>
<evidence type="ECO:0000269" key="6">
    <source>
    </source>
</evidence>
<evidence type="ECO:0000269" key="7">
    <source>
    </source>
</evidence>
<evidence type="ECO:0000269" key="8">
    <source>
    </source>
</evidence>
<evidence type="ECO:0000269" key="9">
    <source>
    </source>
</evidence>
<evidence type="ECO:0000269" key="10">
    <source>
    </source>
</evidence>
<evidence type="ECO:0000269" key="11">
    <source>
    </source>
</evidence>
<evidence type="ECO:0000269" key="12">
    <source>
    </source>
</evidence>
<evidence type="ECO:0000269" key="13">
    <source>
    </source>
</evidence>
<evidence type="ECO:0000269" key="14">
    <source>
    </source>
</evidence>
<evidence type="ECO:0000269" key="15">
    <source>
    </source>
</evidence>
<evidence type="ECO:0000269" key="16">
    <source>
    </source>
</evidence>
<evidence type="ECO:0000303" key="17">
    <source>
    </source>
</evidence>
<evidence type="ECO:0000305" key="18"/>
<evidence type="ECO:0000312" key="19">
    <source>
        <dbReference type="WormBase" id="K12C11.2"/>
    </source>
</evidence>
<evidence type="ECO:0007829" key="20">
    <source>
        <dbReference type="PDB" id="5XQM"/>
    </source>
</evidence>
<sequence>MADDAAQAGDNAEYIKIKVVGQDSNEVHFRVKYGTSMAKLKKSYADRTGVAVNSLRFLFDGRRINDDDTPKTLEMEDDDVIEVYQEQLGGF</sequence>
<proteinExistence type="evidence at protein level"/>
<name>SUMO_CAEEL</name>
<reference key="1">
    <citation type="journal article" date="1997" name="Genomics">
        <title>SMT3A, a human homologue of the S. cerevisiae SMT3 gene, maps to chromosome 21qter and defines a novel gene family.</title>
        <authorList>
            <person name="Lapenta V."/>
            <person name="Chiurazzi P."/>
            <person name="van der Spek P.J."/>
            <person name="Pizzuti A."/>
            <person name="Hanaoka F."/>
            <person name="Brahe C."/>
        </authorList>
    </citation>
    <scope>NUCLEOTIDE SEQUENCE [MRNA]</scope>
</reference>
<reference key="2">
    <citation type="journal article" date="1997" name="Biochem. Biophys. Res. Commun.">
        <title>Identification and characterization of the SMT3 cDNA and gene from nematode Caenorhabditis elegans.</title>
        <authorList>
            <person name="Choudhury B.K."/>
            <person name="Li S.S."/>
        </authorList>
    </citation>
    <scope>NUCLEOTIDE SEQUENCE [GENOMIC DNA / MRNA]</scope>
</reference>
<reference key="3">
    <citation type="journal article" date="1998" name="Science">
        <title>Genome sequence of the nematode C. elegans: a platform for investigating biology.</title>
        <authorList>
            <consortium name="The C. elegans sequencing consortium"/>
        </authorList>
    </citation>
    <scope>NUCLEOTIDE SEQUENCE [LARGE SCALE GENOMIC DNA]</scope>
    <source>
        <strain>Bristol N2</strain>
    </source>
</reference>
<reference key="4">
    <citation type="journal article" date="2002" name="Genome Biol.">
        <title>Functional and phylogenetic analysis of the ubiquitylation system in Caenorhabditis elegans: ubiquitin-conjugating enzymes, ubiquitin-activating enzymes, and ubiquitin-like proteins.</title>
        <authorList>
            <person name="Jones D."/>
            <person name="Crowe E."/>
            <person name="Stevens T.A."/>
            <person name="Candido E.P.M."/>
        </authorList>
    </citation>
    <scope>FUNCTION</scope>
    <scope>INTERACTION WITH LIN-11</scope>
</reference>
<reference key="5">
    <citation type="journal article" date="2004" name="Genes Dev.">
        <title>The small ubiquitin-like modifier (SUMO) is required for gonadal and uterine-vulval morphogenesis in Caenorhabditis elegans.</title>
        <authorList>
            <person name="Broday L."/>
            <person name="Kolotuev I."/>
            <person name="Didier C."/>
            <person name="Bhoumik A."/>
            <person name="Gupta B.P."/>
            <person name="Sternberg P.W."/>
            <person name="Podbilewicz B."/>
            <person name="Ronai Z."/>
        </authorList>
    </citation>
    <scope>FUNCTION</scope>
    <scope>INTERACTION WITH SOP-2</scope>
</reference>
<reference key="6">
    <citation type="journal article" date="2004" name="Nat. Genet.">
        <title>SUMO modification is required for in vivo Hox gene regulation by the Caenorhabditis elegans Polycomb group protein SOP-2.</title>
        <authorList>
            <person name="Zhang H."/>
            <person name="Smolen G.A."/>
            <person name="Palmer R."/>
            <person name="Christoforou A."/>
            <person name="van den Heuvel S."/>
            <person name="Haber D.A."/>
        </authorList>
    </citation>
    <scope>FUNCTION</scope>
    <scope>INTERACTION WITH LIN-1</scope>
</reference>
<reference key="7">
    <citation type="journal article" date="2005" name="Development">
        <title>Sumoylation of LIN-1 promotes transcriptional repression and inhibition of vulval cell fates.</title>
        <authorList>
            <person name="Leight E.R."/>
            <person name="Glossip D."/>
            <person name="Kornfeld K."/>
        </authorList>
    </citation>
    <scope>FUNCTION</scope>
    <scope>INTERACTION WITH TBX-2</scope>
</reference>
<reference key="8">
    <citation type="journal article" date="2005" name="EMBO J.">
        <title>Chromatin regulation and sumoylation in the inhibition of Ras-induced vulval development in Caenorhabditis elegans.</title>
        <authorList>
            <person name="Poulin G."/>
            <person name="Dong Y."/>
            <person name="Fraser A.G."/>
            <person name="Hopper N.A."/>
            <person name="Ahringer J."/>
        </authorList>
    </citation>
    <scope>FUNCTION</scope>
</reference>
<reference key="9">
    <citation type="journal article" date="2006" name="Dev. Biol.">
        <title>The T-box factor TBX-2 and the SUMO conjugating enzyme UBC-9 are required for ABa-derived pharyngeal muscle in C. elegans.</title>
        <authorList>
            <person name="Roy Chowdhuri S."/>
            <person name="Crum T."/>
            <person name="Woollard A."/>
            <person name="Aslam S."/>
            <person name="Okkema P.G."/>
        </authorList>
    </citation>
    <scope>FUNCTION</scope>
</reference>
<reference key="10">
    <citation type="journal article" date="2011" name="PLoS Genet.">
        <title>A bow-tie genetic architecture for morphogenesis suggested by a genome-wide RNAi screen in Caenorhabditis elegans.</title>
        <authorList>
            <person name="Nelson M.D."/>
            <person name="Zhou E."/>
            <person name="Kiontke K."/>
            <person name="Fradin H."/>
            <person name="Maldonado G."/>
            <person name="Martin D."/>
            <person name="Shah K."/>
            <person name="Fitch D.H."/>
        </authorList>
    </citation>
    <scope>FUNCTION</scope>
    <scope>DISRUPTION PHENOTYPE</scope>
</reference>
<reference key="11">
    <citation type="journal article" date="2013" name="Biol. Open">
        <title>Maintenance of muscle myosin levels in adult C. elegans requires both the double bromodomain protein BET-1 and sumoylation.</title>
        <authorList>
            <person name="Fisher K."/>
            <person name="Gee F."/>
            <person name="Wang S."/>
            <person name="Xue F."/>
            <person name="Knapp S."/>
            <person name="Philpott M."/>
            <person name="Wells C."/>
            <person name="Rodriguez M."/>
            <person name="Snoek L.B."/>
            <person name="Kammenga J."/>
            <person name="Poulin G.B."/>
        </authorList>
    </citation>
    <scope>FUNCTION</scope>
    <scope>INTERACTION WITH BET-1</scope>
    <scope>DISRUPTION PHENOTYPE</scope>
</reference>
<reference key="12">
    <citation type="journal article" date="2013" name="PLoS ONE">
        <title>An RNAi-based dimorphic genetic screen identified the double bromodomain protein BET-1 as a sumo-dependent attenuator of RAS-mediated signalling.</title>
        <authorList>
            <person name="Gee F."/>
            <person name="Fisher K."/>
            <person name="Klemstein U."/>
            <person name="Poulin G.B."/>
        </authorList>
    </citation>
    <scope>FUNCTION</scope>
    <scope>INTERACTION WITH BET-1</scope>
    <scope>DISRUPTION PHENOTYPE</scope>
</reference>
<reference key="13">
    <citation type="journal article" date="2014" name="Nat. Commun.">
        <title>Dynamic SUMO modification regulates mitotic chromosome assembly and cell cycle progression in Caenorhabditis elegans.</title>
        <authorList>
            <person name="Pelisch F."/>
            <person name="Sonneville R."/>
            <person name="Pourkarimi E."/>
            <person name="Agostinho A."/>
            <person name="Blow J.J."/>
            <person name="Gartner A."/>
            <person name="Hay R.T."/>
        </authorList>
    </citation>
    <scope>SUBCELLULAR LOCATION</scope>
    <scope>DISRUPTION PHENOTYPE</scope>
</reference>
<reference key="14">
    <citation type="journal article" date="2015" name="G3 (Bethesda)">
        <title>Caenorhabditis elegans TBX-2 Directly Regulates Its Own Expression in a Negative Autoregulatory Loop.</title>
        <authorList>
            <person name="Milton A.C."/>
            <person name="Okkema P.G."/>
        </authorList>
    </citation>
    <scope>DISRUPTION PHENOTYPE</scope>
</reference>
<reference key="15">
    <citation type="journal article" date="2019" name="Elife">
        <title>SUMO peptidase ULP-4 regulates mitochondrial UPR-mediated innate immunity and lifespan extension.</title>
        <authorList>
            <person name="Gao K."/>
            <person name="Li Y."/>
            <person name="Hu S."/>
            <person name="Liu Y."/>
        </authorList>
    </citation>
    <scope>FUNCTION</scope>
    <scope>DISRUPTION PHENOTYPE</scope>
</reference>
<reference evidence="18" key="16">
    <citation type="journal article" date="2021" name="Elife">
        <title>PIE-1 SUMOylation promotes germline fates and piRNA-dependent silencing in C. elegans.</title>
        <authorList>
            <person name="Kim H."/>
            <person name="Ding Y.H."/>
            <person name="Lu S."/>
            <person name="Zuo M.Q."/>
            <person name="Tan W."/>
            <person name="Conte D. Jr."/>
            <person name="Dong M.Q."/>
            <person name="Mello C.C."/>
        </authorList>
    </citation>
    <scope>FUNCTION</scope>
    <scope>DISRUPTION PHENOTYPE</scope>
</reference>
<reference evidence="18" key="17">
    <citation type="journal article" date="2021" name="Elife">
        <title>HDAC1 SUMOylation promotes Argonaute-directed transcriptional silencing in C. elegans.</title>
        <authorList>
            <person name="Kim H."/>
            <person name="Ding Y.H."/>
            <person name="Zhang G."/>
            <person name="Yan Y.H."/>
            <person name="Conte D. Jr."/>
            <person name="Dong M.Q."/>
            <person name="Mello C.C."/>
        </authorList>
    </citation>
    <scope>FUNCTION</scope>
    <scope>DISRUPTION PHENOTYPE</scope>
</reference>
<keyword id="KW-0002">3D-structure</keyword>
<keyword id="KW-0158">Chromosome</keyword>
<keyword id="KW-0963">Cytoplasm</keyword>
<keyword id="KW-0206">Cytoskeleton</keyword>
<keyword id="KW-0217">Developmental protein</keyword>
<keyword id="KW-1017">Isopeptide bond</keyword>
<keyword id="KW-0539">Nucleus</keyword>
<keyword id="KW-1185">Reference proteome</keyword>
<keyword id="KW-0833">Ubl conjugation pathway</keyword>
<accession>P55853</accession>
<dbReference type="EMBL" id="X99600">
    <property type="protein sequence ID" value="CAA67914.1"/>
    <property type="molecule type" value="mRNA"/>
</dbReference>
<dbReference type="EMBL" id="U94830">
    <property type="protein sequence ID" value="AAB67608.1"/>
    <property type="molecule type" value="Genomic_DNA"/>
</dbReference>
<dbReference type="EMBL" id="BX284601">
    <property type="protein sequence ID" value="CCD72942.1"/>
    <property type="molecule type" value="Genomic_DNA"/>
</dbReference>
<dbReference type="PIR" id="JC5582">
    <property type="entry name" value="JC5582"/>
</dbReference>
<dbReference type="RefSeq" id="NP_490842.1">
    <property type="nucleotide sequence ID" value="NM_058441.7"/>
</dbReference>
<dbReference type="PDB" id="5XQM">
    <property type="method" value="NMR"/>
    <property type="chains" value="A=1-90"/>
</dbReference>
<dbReference type="PDBsum" id="5XQM"/>
<dbReference type="BMRB" id="P55853"/>
<dbReference type="SMR" id="P55853"/>
<dbReference type="BioGRID" id="57309">
    <property type="interactions" value="76"/>
</dbReference>
<dbReference type="DIP" id="DIP-25461N"/>
<dbReference type="FunCoup" id="P55853">
    <property type="interactions" value="3243"/>
</dbReference>
<dbReference type="IntAct" id="P55853">
    <property type="interactions" value="36"/>
</dbReference>
<dbReference type="STRING" id="6239.K12C11.2.1"/>
<dbReference type="MoonDB" id="P55853">
    <property type="type" value="Predicted"/>
</dbReference>
<dbReference type="iPTMnet" id="P55853"/>
<dbReference type="PaxDb" id="6239-K12C11.2"/>
<dbReference type="PeptideAtlas" id="P55853"/>
<dbReference type="EnsemblMetazoa" id="K12C11.2.1">
    <property type="protein sequence ID" value="K12C11.2.1"/>
    <property type="gene ID" value="WBGene00004888"/>
</dbReference>
<dbReference type="GeneID" id="266820"/>
<dbReference type="KEGG" id="cel:CELE_K12C11.2"/>
<dbReference type="UCSC" id="K12C11.2.1">
    <property type="organism name" value="c. elegans"/>
</dbReference>
<dbReference type="AGR" id="WB:WBGene00004888"/>
<dbReference type="CTD" id="266820"/>
<dbReference type="WormBase" id="K12C11.2">
    <property type="protein sequence ID" value="CE18056"/>
    <property type="gene ID" value="WBGene00004888"/>
    <property type="gene designation" value="smo-1"/>
</dbReference>
<dbReference type="eggNOG" id="KOG1769">
    <property type="taxonomic scope" value="Eukaryota"/>
</dbReference>
<dbReference type="HOGENOM" id="CLU_148322_4_2_1"/>
<dbReference type="InParanoid" id="P55853"/>
<dbReference type="OMA" id="KMSTQMG"/>
<dbReference type="OrthoDB" id="442921at2759"/>
<dbReference type="PhylomeDB" id="P55853"/>
<dbReference type="Reactome" id="R-CEL-3065676">
    <property type="pathway name" value="SUMO is conjugated to E1 (UBA2:SAE1)"/>
</dbReference>
<dbReference type="Reactome" id="R-CEL-3065678">
    <property type="pathway name" value="SUMO is transferred from E1 to E2 (UBE2I, UBC9)"/>
</dbReference>
<dbReference type="Reactome" id="R-CEL-3065679">
    <property type="pathway name" value="SUMO is proteolytically processed"/>
</dbReference>
<dbReference type="Reactome" id="R-CEL-3108214">
    <property type="pathway name" value="SUMOylation of DNA damage response and repair proteins"/>
</dbReference>
<dbReference type="Reactome" id="R-CEL-3232118">
    <property type="pathway name" value="SUMOylation of transcription factors"/>
</dbReference>
<dbReference type="Reactome" id="R-CEL-3232142">
    <property type="pathway name" value="SUMOylation of ubiquitinylation proteins"/>
</dbReference>
<dbReference type="Reactome" id="R-CEL-3899300">
    <property type="pathway name" value="SUMOylation of transcription cofactors"/>
</dbReference>
<dbReference type="Reactome" id="R-CEL-4085377">
    <property type="pathway name" value="SUMOylation of SUMOylation proteins"/>
</dbReference>
<dbReference type="Reactome" id="R-CEL-4090294">
    <property type="pathway name" value="SUMOylation of intracellular receptors"/>
</dbReference>
<dbReference type="Reactome" id="R-CEL-4551638">
    <property type="pathway name" value="SUMOylation of chromatin organization proteins"/>
</dbReference>
<dbReference type="Reactome" id="R-CEL-4570464">
    <property type="pathway name" value="SUMOylation of RNA binding proteins"/>
</dbReference>
<dbReference type="Reactome" id="R-CEL-4615885">
    <property type="pathway name" value="SUMOylation of DNA replication proteins"/>
</dbReference>
<dbReference type="Reactome" id="R-CEL-5696395">
    <property type="pathway name" value="Formation of Incision Complex in GG-NER"/>
</dbReference>
<dbReference type="Reactome" id="R-CEL-877312">
    <property type="pathway name" value="Regulation of IFNG signaling"/>
</dbReference>
<dbReference type="Reactome" id="R-CEL-8866904">
    <property type="pathway name" value="Negative regulation of activity of TFAP2 (AP-2) family transcription factors"/>
</dbReference>
<dbReference type="Reactome" id="R-CEL-9615933">
    <property type="pathway name" value="Postmitotic nuclear pore complex (NPC) reformation"/>
</dbReference>
<dbReference type="Reactome" id="R-CEL-9793242">
    <property type="pathway name" value="SUMOylation of nuclear envelope proteins"/>
</dbReference>
<dbReference type="Reactome" id="R-CEL-9856649">
    <property type="pathway name" value="Transcriptional and post-translational regulation of MITF-M expression and activity"/>
</dbReference>
<dbReference type="SignaLink" id="P55853"/>
<dbReference type="PRO" id="PR:P55853"/>
<dbReference type="Proteomes" id="UP000001940">
    <property type="component" value="Chromosome I"/>
</dbReference>
<dbReference type="Bgee" id="WBGene00004888">
    <property type="expression patterns" value="Expressed in embryo and 4 other cell types or tissues"/>
</dbReference>
<dbReference type="GO" id="GO:0005813">
    <property type="term" value="C:centrosome"/>
    <property type="evidence" value="ECO:0007669"/>
    <property type="project" value="UniProtKB-SubCell"/>
</dbReference>
<dbReference type="GO" id="GO:0005694">
    <property type="term" value="C:chromosome"/>
    <property type="evidence" value="ECO:0007669"/>
    <property type="project" value="UniProtKB-SubCell"/>
</dbReference>
<dbReference type="GO" id="GO:0005737">
    <property type="term" value="C:cytoplasm"/>
    <property type="evidence" value="ECO:0007669"/>
    <property type="project" value="UniProtKB-SubCell"/>
</dbReference>
<dbReference type="GO" id="GO:0005634">
    <property type="term" value="C:nucleus"/>
    <property type="evidence" value="ECO:0000318"/>
    <property type="project" value="GO_Central"/>
</dbReference>
<dbReference type="GO" id="GO:0005819">
    <property type="term" value="C:spindle"/>
    <property type="evidence" value="ECO:0007669"/>
    <property type="project" value="UniProtKB-SubCell"/>
</dbReference>
<dbReference type="GO" id="GO:0042802">
    <property type="term" value="F:identical protein binding"/>
    <property type="evidence" value="ECO:0000353"/>
    <property type="project" value="IntAct"/>
</dbReference>
<dbReference type="GO" id="GO:0031386">
    <property type="term" value="F:protein tag activity"/>
    <property type="evidence" value="ECO:0000318"/>
    <property type="project" value="GO_Central"/>
</dbReference>
<dbReference type="GO" id="GO:0044389">
    <property type="term" value="F:ubiquitin-like protein ligase binding"/>
    <property type="evidence" value="ECO:0000318"/>
    <property type="project" value="GO_Central"/>
</dbReference>
<dbReference type="GO" id="GO:0009792">
    <property type="term" value="P:embryo development ending in birth or egg hatching"/>
    <property type="evidence" value="ECO:0000315"/>
    <property type="project" value="WormBase"/>
</dbReference>
<dbReference type="GO" id="GO:0007080">
    <property type="term" value="P:mitotic metaphase chromosome alignment"/>
    <property type="evidence" value="ECO:0000315"/>
    <property type="project" value="WormBase"/>
</dbReference>
<dbReference type="GO" id="GO:0051306">
    <property type="term" value="P:mitotic sister chromatid separation"/>
    <property type="evidence" value="ECO:0000315"/>
    <property type="project" value="WormBase"/>
</dbReference>
<dbReference type="GO" id="GO:0071965">
    <property type="term" value="P:multicellular organismal locomotion"/>
    <property type="evidence" value="ECO:0000315"/>
    <property type="project" value="UniProtKB"/>
</dbReference>
<dbReference type="GO" id="GO:0046716">
    <property type="term" value="P:muscle cell cellular homeostasis"/>
    <property type="evidence" value="ECO:0000315"/>
    <property type="project" value="UniProtKB"/>
</dbReference>
<dbReference type="GO" id="GO:0045892">
    <property type="term" value="P:negative regulation of DNA-templated transcription"/>
    <property type="evidence" value="ECO:0000316"/>
    <property type="project" value="UniProtKB"/>
</dbReference>
<dbReference type="GO" id="GO:0000122">
    <property type="term" value="P:negative regulation of transcription by RNA polymerase II"/>
    <property type="evidence" value="ECO:0000315"/>
    <property type="project" value="WormBase"/>
</dbReference>
<dbReference type="GO" id="GO:0002119">
    <property type="term" value="P:nematode larval development"/>
    <property type="evidence" value="ECO:0000315"/>
    <property type="project" value="WormBase"/>
</dbReference>
<dbReference type="GO" id="GO:0110039">
    <property type="term" value="P:positive regulation of nematode male tail tip morphogenesis"/>
    <property type="evidence" value="ECO:0000315"/>
    <property type="project" value="UniProtKB"/>
</dbReference>
<dbReference type="GO" id="GO:0034502">
    <property type="term" value="P:protein localization to chromosome"/>
    <property type="evidence" value="ECO:0000315"/>
    <property type="project" value="WormBase"/>
</dbReference>
<dbReference type="GO" id="GO:0016925">
    <property type="term" value="P:protein sumoylation"/>
    <property type="evidence" value="ECO:0000315"/>
    <property type="project" value="WormBase"/>
</dbReference>
<dbReference type="GO" id="GO:0010468">
    <property type="term" value="P:regulation of gene expression"/>
    <property type="evidence" value="ECO:0000315"/>
    <property type="project" value="UniProtKB"/>
</dbReference>
<dbReference type="GO" id="GO:0031647">
    <property type="term" value="P:regulation of protein stability"/>
    <property type="evidence" value="ECO:0000315"/>
    <property type="project" value="UniProtKB"/>
</dbReference>
<dbReference type="GO" id="GO:0070194">
    <property type="term" value="P:synaptonemal complex disassembly"/>
    <property type="evidence" value="ECO:0000315"/>
    <property type="project" value="WormBase"/>
</dbReference>
<dbReference type="CDD" id="cd16114">
    <property type="entry name" value="Ubl_SUMO1"/>
    <property type="match status" value="1"/>
</dbReference>
<dbReference type="FunFam" id="3.10.20.90:FF:000280">
    <property type="entry name" value="Small ubiquitin-related modifier"/>
    <property type="match status" value="1"/>
</dbReference>
<dbReference type="Gene3D" id="3.10.20.90">
    <property type="entry name" value="Phosphatidylinositol 3-kinase Catalytic Subunit, Chain A, domain 1"/>
    <property type="match status" value="1"/>
</dbReference>
<dbReference type="InterPro" id="IPR022617">
    <property type="entry name" value="Rad60/SUMO-like_dom"/>
</dbReference>
<dbReference type="InterPro" id="IPR046332">
    <property type="entry name" value="SUMO1_Ubl"/>
</dbReference>
<dbReference type="InterPro" id="IPR000626">
    <property type="entry name" value="Ubiquitin-like_dom"/>
</dbReference>
<dbReference type="InterPro" id="IPR029071">
    <property type="entry name" value="Ubiquitin-like_domsf"/>
</dbReference>
<dbReference type="PANTHER" id="PTHR10562">
    <property type="entry name" value="SMALL UBIQUITIN-RELATED MODIFIER"/>
    <property type="match status" value="1"/>
</dbReference>
<dbReference type="Pfam" id="PF11976">
    <property type="entry name" value="Rad60-SLD"/>
    <property type="match status" value="1"/>
</dbReference>
<dbReference type="SMART" id="SM00213">
    <property type="entry name" value="UBQ"/>
    <property type="match status" value="1"/>
</dbReference>
<dbReference type="SUPFAM" id="SSF54236">
    <property type="entry name" value="Ubiquitin-like"/>
    <property type="match status" value="1"/>
</dbReference>
<dbReference type="PROSITE" id="PS50053">
    <property type="entry name" value="UBIQUITIN_2"/>
    <property type="match status" value="1"/>
</dbReference>
<comment type="function">
    <text evidence="3 4 5 6 7 8 9 10 11 14 15 16">Ubiquitin-like protein which can be covalently attached to target lysines as a monomer. Does not seem to be involved in protein degradation and may function as an antagonist of ubiquitin in the degradation process (PubMed:11806825). Plays a role in a number of cellular processes such as nuclear transport, DNA replication and repair, mitosis and signal transduction (PubMed:11806825, PubMed:25475837). Covalent attachment to its substrates requires prior activation by the E1 complex aos-1-uba-2 and linkage to the E2 enzyme ubc-9, and can be promoted by an E3 ligase such as gei-17 (PubMed:15107848, PubMed:16701625). Required for embryonic development, fertility, vulval morphogenesis and inhibition of vulval cell fates (PubMed:15466489, PubMed:15689373, PubMed:15990876, PubMed:24349540, PubMed:34003109, PubMed:34003111). Probably by sumoylating bet-1, prevents muscle myosin depletion in aging adults probably by preventing myoblast growth factor receptor egl-15 overexpression (PubMed:24285704). Plays a role in the attenuation of the let-60/ras pathway (PubMed:24285704, PubMed:24349540). Plays a role in male tail tip morphogenesis (PubMed:21408209). Plays a role in the mitochondrial stress response with its covalent attachment to transcription factors dve-1 and afts-1 negatively regulating the mitochondrial unfolded protein response (PubMed:30642431).</text>
</comment>
<comment type="subunit">
    <text evidence="4 5 6 8 10 11">Covalently attached to tbx-2 (PubMed:16701625). Covalently attached to lin-1 (PubMed:15689373). Covalently attached to lin-11 (PubMed:15466489). Covalently attached to sop-2 (PubMed:15107848). Covalently attached to bet-1 (PubMed:24285704, PubMed:24349540).</text>
</comment>
<comment type="interaction">
    <interactant intactId="EBI-313647">
        <id>P55853</id>
    </interactant>
    <interactant intactId="EBI-314014">
        <id>Q23158</id>
        <label>atn-1</label>
    </interactant>
    <organismsDiffer>false</organismsDiffer>
    <experiments>3</experiments>
</comment>
<comment type="interaction">
    <interactant intactId="EBI-313647">
        <id>P55853</id>
    </interactant>
    <interactant intactId="EBI-3895480">
        <id>Q21209</id>
        <label>brd-1</label>
    </interactant>
    <organismsDiffer>false</organismsDiffer>
    <experiments>3</experiments>
</comment>
<comment type="interaction">
    <interactant intactId="EBI-313647">
        <id>P55853</id>
    </interactant>
    <interactant intactId="EBI-313626">
        <id>P90740</id>
        <label>fan-1</label>
    </interactant>
    <organismsDiffer>false</organismsDiffer>
    <experiments>3</experiments>
</comment>
<comment type="interaction">
    <interactant intactId="EBI-313647">
        <id>P55853</id>
    </interactant>
    <interactant intactId="EBI-320790">
        <id>Q94420</id>
        <label>mel-26</label>
    </interactant>
    <organismsDiffer>false</organismsDiffer>
    <experiments>5</experiments>
</comment>
<comment type="interaction">
    <interactant intactId="EBI-313647">
        <id>P55853</id>
    </interactant>
    <interactant intactId="EBI-313647">
        <id>P55853</id>
        <label>smo-1</label>
    </interactant>
    <organismsDiffer>false</organismsDiffer>
    <experiments>4</experiments>
</comment>
<comment type="interaction">
    <interactant intactId="EBI-313647">
        <id>P55853</id>
    </interactant>
    <interactant intactId="EBI-328938">
        <id>Q95017</id>
        <label>ubc-9</label>
    </interactant>
    <organismsDiffer>false</organismsDiffer>
    <experiments>5</experiments>
</comment>
<comment type="subcellular location">
    <subcellularLocation>
        <location evidence="12">Cytoplasm</location>
    </subcellularLocation>
    <subcellularLocation>
        <location evidence="12">Nucleus</location>
    </subcellularLocation>
    <subcellularLocation>
        <location evidence="12">Cytoplasm</location>
        <location evidence="12">Cytoskeleton</location>
        <location evidence="12">Spindle</location>
    </subcellularLocation>
    <subcellularLocation>
        <location evidence="12">Chromosome</location>
    </subcellularLocation>
    <subcellularLocation>
        <location evidence="12">Cytoplasm</location>
        <location evidence="12">Cytoskeleton</location>
        <location evidence="12">Microtubule organizing center</location>
        <location evidence="12">Centrosome</location>
    </subcellularLocation>
    <text evidence="12">At the first embryonic mitotic division, enriched in the nucleus and released to the cytoplasm when the nuclear envelope breaks down at the start of mitosis. During mitosis, localizes to the metaphase plate and to the centrosomal region. Also localizes to segregating chromosomes at the beginning of anaphase. At late anaphase and telophase, observed in the spindle midzone and in the two daughter nuclei.</text>
</comment>
<comment type="PTM">
    <text evidence="18">Cleavage of precursor form by ulp-1 is necessary for function.</text>
</comment>
<comment type="disruption phenotype">
    <text evidence="9 10 11 12 13 14 15 16">RNAi-mediated knockdown reduces survival (PubMed:30642431). RNAi-mediated knockdown disrupts tail tip morphogenesis resulting in retention of the pointed larval tail tip in adult males (also known as the Lep phenotype) (PubMed:21408209). RNAi-mediated knockdown causes chromosome misalignment and anaphase bridges during the first embryonic mitotic division (PubMed:25475837). RNAi-mediated knockdown results in impaired locomotion in 23% of animals (PubMed:24285704). RNAi-mediated knockdown results in ectopic expression of egl-17 in multiple vulva precursor cells and a moderate increase in phosphorylation of mpk-1 (PubMed:24349540). RNAi-mediated knockdown results in impaired activation of the mitochondrial unfolded protein response following the inhibition of respiration induced by antimycin A (PubMed:30642431). RNAi-mediated knockdown causes ectopic tbx-2 expression in seam cells and in the syncytial hypodermis (PubMed:25873636). RNAi-mediated knockdown in a bet-1 mutant background results in decreased myo-3 levels in muscles and increased transcription levels of egl-15, sur-1 and let-60 (PubMed:24285704). RNAi-mediated knockdown results in 100% embryonic arrest with 23% having extra intestinal cells, which increases to 73% in pie-1 mutant background (PubMed:34003111). Abolishes the sumoylation of hda-1 and mep-1 in adult (PubMed:34003111). RNAi-mediated knockdown reduces the interaction of hda-1 with several chromatin factors including mep-1, ama-1, met-2, lin-40, lin-53, dcp-66 and spr-5, and the nuclear Argonaute, wago-9 (PubMed:34003109). RNAi-mediated knockdown results in defective piRNA-mediated silencing (PubMed:34003109).</text>
</comment>
<comment type="similarity">
    <text evidence="18">Belongs to the ubiquitin family. SUMO subfamily.</text>
</comment>
<organism>
    <name type="scientific">Caenorhabditis elegans</name>
    <dbReference type="NCBI Taxonomy" id="6239"/>
    <lineage>
        <taxon>Eukaryota</taxon>
        <taxon>Metazoa</taxon>
        <taxon>Ecdysozoa</taxon>
        <taxon>Nematoda</taxon>
        <taxon>Chromadorea</taxon>
        <taxon>Rhabditida</taxon>
        <taxon>Rhabditina</taxon>
        <taxon>Rhabditomorpha</taxon>
        <taxon>Rhabditoidea</taxon>
        <taxon>Rhabditidae</taxon>
        <taxon>Peloderinae</taxon>
        <taxon>Caenorhabditis</taxon>
    </lineage>
</organism>
<feature type="chain" id="PRO_0000114890" description="Small ubiquitin-related modifier">
    <location>
        <begin position="1"/>
        <end position="90"/>
    </location>
</feature>
<feature type="propeptide" id="PRO_0000271227" evidence="1">
    <location>
        <position position="91"/>
    </location>
</feature>
<feature type="domain" description="Ubiquitin-like" evidence="2">
    <location>
        <begin position="13"/>
        <end position="91"/>
    </location>
</feature>
<feature type="cross-link" description="Glycyl lysine isopeptide (Gly-Lys) (interchain with K-? in acceptor proteins)" evidence="2">
    <location>
        <position position="90"/>
    </location>
</feature>
<feature type="strand" evidence="20">
    <location>
        <begin position="12"/>
        <end position="20"/>
    </location>
</feature>
<feature type="strand" evidence="20">
    <location>
        <begin position="26"/>
        <end position="31"/>
    </location>
</feature>
<feature type="helix" evidence="20">
    <location>
        <begin position="37"/>
        <end position="48"/>
    </location>
</feature>
<feature type="helix" evidence="20">
    <location>
        <begin position="52"/>
        <end position="54"/>
    </location>
</feature>
<feature type="strand" evidence="20">
    <location>
        <begin position="56"/>
        <end position="59"/>
    </location>
</feature>
<feature type="helix" evidence="20">
    <location>
        <begin position="70"/>
        <end position="73"/>
    </location>
</feature>
<feature type="strand" evidence="20">
    <location>
        <begin position="79"/>
        <end position="84"/>
    </location>
</feature>
<feature type="turn" evidence="20">
    <location>
        <begin position="87"/>
        <end position="89"/>
    </location>
</feature>
<protein>
    <recommendedName>
        <fullName>Small ubiquitin-related modifier</fullName>
        <shortName>SUMO</shortName>
    </recommendedName>
    <alternativeName>
        <fullName>Ubiquitin-like protein SMT3</fullName>
    </alternativeName>
</protein>
<gene>
    <name evidence="19" type="primary">smo-1</name>
    <name evidence="19" type="synonym">smt3</name>
    <name evidence="17" type="synonym">sumo</name>
    <name evidence="19" type="ORF">K12C11.2</name>
</gene>